<sequence length="506" mass="56720">MKNTLFHRLKRPIAAAFVGALTTLAFAPYQIWLVALITPALLLILIHGQSRRQALWTGYAWGFGQFASGISWVYVSIAGFGGMPLAANLFLMGALIAYLAIYPALFTWSYQRFFAKATLLNLLLAAPALWLIADWLRGWVMTGFPWLWLGYSQIDSPLASFAPIGGVELLTLLLLVGAGAIAYAVIHKRWSMLLIPTVLLSTGYGLSHWDWVTPQPDKTTKVALIQGNVDQNLKWLPSQRWPTIMKYTDLSRENWDADIIIWPEAAIPAFEVELPSYLSNLDSAAKMNQSAIISGIVNQAEDGQFYNSILAVGLTPYGDYSFDLTERYHKHHLLPFGEFVPFEQILRPLAPFFNLPMSSFSRGDFVQPNIVANGHPMAPALCYEIIFNEQVRQNVTDDTDFLLTLSNDAWFGRSIGPLQHMEIARMRALELGKPLIRSTNNGLTAVTDHRGKIIASIPQFETAVLRAELTPTQGQTPYHQLGSWPLYIWVALSLALAWWRKRRTNA</sequence>
<name>LNT_VIBVU</name>
<dbReference type="EC" id="2.3.1.269" evidence="1"/>
<dbReference type="EMBL" id="AE016795">
    <property type="protein sequence ID" value="AAO08804.1"/>
    <property type="molecule type" value="Genomic_DNA"/>
</dbReference>
<dbReference type="RefSeq" id="WP_011078379.1">
    <property type="nucleotide sequence ID" value="NC_004459.3"/>
</dbReference>
<dbReference type="SMR" id="Q8DFE4"/>
<dbReference type="KEGG" id="vvu:VV1_0270"/>
<dbReference type="HOGENOM" id="CLU_019563_3_0_6"/>
<dbReference type="UniPathway" id="UPA00666"/>
<dbReference type="Proteomes" id="UP000002275">
    <property type="component" value="Chromosome 1"/>
</dbReference>
<dbReference type="GO" id="GO:0005886">
    <property type="term" value="C:plasma membrane"/>
    <property type="evidence" value="ECO:0007669"/>
    <property type="project" value="UniProtKB-SubCell"/>
</dbReference>
<dbReference type="GO" id="GO:0016410">
    <property type="term" value="F:N-acyltransferase activity"/>
    <property type="evidence" value="ECO:0007669"/>
    <property type="project" value="UniProtKB-UniRule"/>
</dbReference>
<dbReference type="GO" id="GO:0042158">
    <property type="term" value="P:lipoprotein biosynthetic process"/>
    <property type="evidence" value="ECO:0007669"/>
    <property type="project" value="UniProtKB-UniRule"/>
</dbReference>
<dbReference type="CDD" id="cd07571">
    <property type="entry name" value="ALP_N-acyl_transferase"/>
    <property type="match status" value="1"/>
</dbReference>
<dbReference type="Gene3D" id="3.60.110.10">
    <property type="entry name" value="Carbon-nitrogen hydrolase"/>
    <property type="match status" value="1"/>
</dbReference>
<dbReference type="HAMAP" id="MF_01148">
    <property type="entry name" value="Lnt"/>
    <property type="match status" value="1"/>
</dbReference>
<dbReference type="InterPro" id="IPR004563">
    <property type="entry name" value="Apolipo_AcylTrfase"/>
</dbReference>
<dbReference type="InterPro" id="IPR003010">
    <property type="entry name" value="C-N_Hydrolase"/>
</dbReference>
<dbReference type="InterPro" id="IPR036526">
    <property type="entry name" value="C-N_Hydrolase_sf"/>
</dbReference>
<dbReference type="InterPro" id="IPR045378">
    <property type="entry name" value="LNT_N"/>
</dbReference>
<dbReference type="NCBIfam" id="TIGR00546">
    <property type="entry name" value="lnt"/>
    <property type="match status" value="1"/>
</dbReference>
<dbReference type="PANTHER" id="PTHR38686">
    <property type="entry name" value="APOLIPOPROTEIN N-ACYLTRANSFERASE"/>
    <property type="match status" value="1"/>
</dbReference>
<dbReference type="PANTHER" id="PTHR38686:SF1">
    <property type="entry name" value="APOLIPOPROTEIN N-ACYLTRANSFERASE"/>
    <property type="match status" value="1"/>
</dbReference>
<dbReference type="Pfam" id="PF00795">
    <property type="entry name" value="CN_hydrolase"/>
    <property type="match status" value="1"/>
</dbReference>
<dbReference type="Pfam" id="PF20154">
    <property type="entry name" value="LNT_N"/>
    <property type="match status" value="1"/>
</dbReference>
<dbReference type="SUPFAM" id="SSF56317">
    <property type="entry name" value="Carbon-nitrogen hydrolase"/>
    <property type="match status" value="1"/>
</dbReference>
<dbReference type="PROSITE" id="PS50263">
    <property type="entry name" value="CN_HYDROLASE"/>
    <property type="match status" value="1"/>
</dbReference>
<proteinExistence type="inferred from homology"/>
<feature type="chain" id="PRO_0000178109" description="Apolipoprotein N-acyltransferase">
    <location>
        <begin position="1"/>
        <end position="506"/>
    </location>
</feature>
<feature type="transmembrane region" description="Helical" evidence="1">
    <location>
        <begin position="26"/>
        <end position="46"/>
    </location>
</feature>
<feature type="transmembrane region" description="Helical" evidence="1">
    <location>
        <begin position="66"/>
        <end position="86"/>
    </location>
</feature>
<feature type="transmembrane region" description="Helical" evidence="1">
    <location>
        <begin position="89"/>
        <end position="109"/>
    </location>
</feature>
<feature type="transmembrane region" description="Helical" evidence="1">
    <location>
        <begin position="113"/>
        <end position="133"/>
    </location>
</feature>
<feature type="transmembrane region" description="Helical" evidence="1">
    <location>
        <begin position="166"/>
        <end position="186"/>
    </location>
</feature>
<feature type="transmembrane region" description="Helical" evidence="1">
    <location>
        <begin position="192"/>
        <end position="212"/>
    </location>
</feature>
<feature type="transmembrane region" description="Helical" evidence="1">
    <location>
        <begin position="479"/>
        <end position="499"/>
    </location>
</feature>
<feature type="domain" description="CN hydrolase" evidence="1">
    <location>
        <begin position="225"/>
        <end position="471"/>
    </location>
</feature>
<feature type="active site" description="Proton acceptor" evidence="1">
    <location>
        <position position="264"/>
    </location>
</feature>
<feature type="active site" evidence="1">
    <location>
        <position position="330"/>
    </location>
</feature>
<feature type="active site" description="Nucleophile" evidence="1">
    <location>
        <position position="382"/>
    </location>
</feature>
<organism>
    <name type="scientific">Vibrio vulnificus (strain CMCP6)</name>
    <dbReference type="NCBI Taxonomy" id="216895"/>
    <lineage>
        <taxon>Bacteria</taxon>
        <taxon>Pseudomonadati</taxon>
        <taxon>Pseudomonadota</taxon>
        <taxon>Gammaproteobacteria</taxon>
        <taxon>Vibrionales</taxon>
        <taxon>Vibrionaceae</taxon>
        <taxon>Vibrio</taxon>
    </lineage>
</organism>
<accession>Q8DFE4</accession>
<keyword id="KW-0012">Acyltransferase</keyword>
<keyword id="KW-0997">Cell inner membrane</keyword>
<keyword id="KW-1003">Cell membrane</keyword>
<keyword id="KW-0472">Membrane</keyword>
<keyword id="KW-0808">Transferase</keyword>
<keyword id="KW-0812">Transmembrane</keyword>
<keyword id="KW-1133">Transmembrane helix</keyword>
<protein>
    <recommendedName>
        <fullName evidence="1">Apolipoprotein N-acyltransferase</fullName>
        <shortName evidence="1">ALP N-acyltransferase</shortName>
        <ecNumber evidence="1">2.3.1.269</ecNumber>
    </recommendedName>
</protein>
<gene>
    <name evidence="1" type="primary">lnt</name>
    <name type="ordered locus">VV1_0270</name>
</gene>
<comment type="function">
    <text evidence="1">Catalyzes the phospholipid dependent N-acylation of the N-terminal cysteine of apolipoprotein, the last step in lipoprotein maturation.</text>
</comment>
<comment type="catalytic activity">
    <reaction evidence="1">
        <text>N-terminal S-1,2-diacyl-sn-glyceryl-L-cysteinyl-[lipoprotein] + a glycerophospholipid = N-acyl-S-1,2-diacyl-sn-glyceryl-L-cysteinyl-[lipoprotein] + a 2-acyl-sn-glycero-3-phospholipid + H(+)</text>
        <dbReference type="Rhea" id="RHEA:48228"/>
        <dbReference type="Rhea" id="RHEA-COMP:14681"/>
        <dbReference type="Rhea" id="RHEA-COMP:14684"/>
        <dbReference type="ChEBI" id="CHEBI:15378"/>
        <dbReference type="ChEBI" id="CHEBI:136912"/>
        <dbReference type="ChEBI" id="CHEBI:140656"/>
        <dbReference type="ChEBI" id="CHEBI:140657"/>
        <dbReference type="ChEBI" id="CHEBI:140660"/>
        <dbReference type="EC" id="2.3.1.269"/>
    </reaction>
</comment>
<comment type="pathway">
    <text evidence="1">Protein modification; lipoprotein biosynthesis (N-acyl transfer).</text>
</comment>
<comment type="subcellular location">
    <subcellularLocation>
        <location evidence="1">Cell inner membrane</location>
        <topology evidence="1">Multi-pass membrane protein</topology>
    </subcellularLocation>
</comment>
<comment type="similarity">
    <text evidence="1">Belongs to the CN hydrolase family. Apolipoprotein N-acyltransferase subfamily.</text>
</comment>
<reference key="1">
    <citation type="submission" date="2002-12" db="EMBL/GenBank/DDBJ databases">
        <title>Complete genome sequence of Vibrio vulnificus CMCP6.</title>
        <authorList>
            <person name="Rhee J.H."/>
            <person name="Kim S.Y."/>
            <person name="Chung S.S."/>
            <person name="Kim J.J."/>
            <person name="Moon Y.H."/>
            <person name="Jeong H."/>
            <person name="Choy H.E."/>
        </authorList>
    </citation>
    <scope>NUCLEOTIDE SEQUENCE [LARGE SCALE GENOMIC DNA]</scope>
    <source>
        <strain>CMCP6</strain>
    </source>
</reference>
<evidence type="ECO:0000255" key="1">
    <source>
        <dbReference type="HAMAP-Rule" id="MF_01148"/>
    </source>
</evidence>